<dbReference type="EC" id="2.7.1.148" evidence="1"/>
<dbReference type="EMBL" id="CP000551">
    <property type="protein sequence ID" value="ABM70212.1"/>
    <property type="molecule type" value="Genomic_DNA"/>
</dbReference>
<dbReference type="RefSeq" id="WP_011818368.1">
    <property type="nucleotide sequence ID" value="NC_008816.1"/>
</dbReference>
<dbReference type="SMR" id="A2BR01"/>
<dbReference type="STRING" id="146891.A9601_09281"/>
<dbReference type="KEGG" id="pmb:A9601_09281"/>
<dbReference type="eggNOG" id="COG1947">
    <property type="taxonomic scope" value="Bacteria"/>
</dbReference>
<dbReference type="HOGENOM" id="CLU_053057_1_1_3"/>
<dbReference type="OrthoDB" id="9809438at2"/>
<dbReference type="UniPathway" id="UPA00056">
    <property type="reaction ID" value="UER00094"/>
</dbReference>
<dbReference type="Proteomes" id="UP000002590">
    <property type="component" value="Chromosome"/>
</dbReference>
<dbReference type="GO" id="GO:0050515">
    <property type="term" value="F:4-(cytidine 5'-diphospho)-2-C-methyl-D-erythritol kinase activity"/>
    <property type="evidence" value="ECO:0007669"/>
    <property type="project" value="UniProtKB-UniRule"/>
</dbReference>
<dbReference type="GO" id="GO:0005524">
    <property type="term" value="F:ATP binding"/>
    <property type="evidence" value="ECO:0007669"/>
    <property type="project" value="UniProtKB-UniRule"/>
</dbReference>
<dbReference type="GO" id="GO:0019288">
    <property type="term" value="P:isopentenyl diphosphate biosynthetic process, methylerythritol 4-phosphate pathway"/>
    <property type="evidence" value="ECO:0007669"/>
    <property type="project" value="UniProtKB-UniRule"/>
</dbReference>
<dbReference type="GO" id="GO:0016114">
    <property type="term" value="P:terpenoid biosynthetic process"/>
    <property type="evidence" value="ECO:0007669"/>
    <property type="project" value="InterPro"/>
</dbReference>
<dbReference type="Gene3D" id="3.30.230.10">
    <property type="match status" value="1"/>
</dbReference>
<dbReference type="Gene3D" id="3.30.70.890">
    <property type="entry name" value="GHMP kinase, C-terminal domain"/>
    <property type="match status" value="1"/>
</dbReference>
<dbReference type="HAMAP" id="MF_00061">
    <property type="entry name" value="IspE"/>
    <property type="match status" value="1"/>
</dbReference>
<dbReference type="InterPro" id="IPR013750">
    <property type="entry name" value="GHMP_kinase_C_dom"/>
</dbReference>
<dbReference type="InterPro" id="IPR036554">
    <property type="entry name" value="GHMP_kinase_C_sf"/>
</dbReference>
<dbReference type="InterPro" id="IPR006204">
    <property type="entry name" value="GHMP_kinase_N_dom"/>
</dbReference>
<dbReference type="InterPro" id="IPR004424">
    <property type="entry name" value="IspE"/>
</dbReference>
<dbReference type="InterPro" id="IPR020568">
    <property type="entry name" value="Ribosomal_Su5_D2-typ_SF"/>
</dbReference>
<dbReference type="InterPro" id="IPR014721">
    <property type="entry name" value="Ribsml_uS5_D2-typ_fold_subgr"/>
</dbReference>
<dbReference type="NCBIfam" id="TIGR00154">
    <property type="entry name" value="ispE"/>
    <property type="match status" value="1"/>
</dbReference>
<dbReference type="PANTHER" id="PTHR43527">
    <property type="entry name" value="4-DIPHOSPHOCYTIDYL-2-C-METHYL-D-ERYTHRITOL KINASE, CHLOROPLASTIC"/>
    <property type="match status" value="1"/>
</dbReference>
<dbReference type="PANTHER" id="PTHR43527:SF2">
    <property type="entry name" value="4-DIPHOSPHOCYTIDYL-2-C-METHYL-D-ERYTHRITOL KINASE, CHLOROPLASTIC"/>
    <property type="match status" value="1"/>
</dbReference>
<dbReference type="Pfam" id="PF08544">
    <property type="entry name" value="GHMP_kinases_C"/>
    <property type="match status" value="1"/>
</dbReference>
<dbReference type="Pfam" id="PF00288">
    <property type="entry name" value="GHMP_kinases_N"/>
    <property type="match status" value="1"/>
</dbReference>
<dbReference type="PIRSF" id="PIRSF010376">
    <property type="entry name" value="IspE"/>
    <property type="match status" value="1"/>
</dbReference>
<dbReference type="SUPFAM" id="SSF55060">
    <property type="entry name" value="GHMP Kinase, C-terminal domain"/>
    <property type="match status" value="1"/>
</dbReference>
<dbReference type="SUPFAM" id="SSF54211">
    <property type="entry name" value="Ribosomal protein S5 domain 2-like"/>
    <property type="match status" value="1"/>
</dbReference>
<accession>A2BR01</accession>
<protein>
    <recommendedName>
        <fullName evidence="1">4-diphosphocytidyl-2-C-methyl-D-erythritol kinase</fullName>
        <shortName evidence="1">CMK</shortName>
        <ecNumber evidence="1">2.7.1.148</ecNumber>
    </recommendedName>
    <alternativeName>
        <fullName evidence="1">4-(cytidine-5'-diphospho)-2-C-methyl-D-erythritol kinase</fullName>
    </alternativeName>
</protein>
<proteinExistence type="inferred from homology"/>
<evidence type="ECO:0000255" key="1">
    <source>
        <dbReference type="HAMAP-Rule" id="MF_00061"/>
    </source>
</evidence>
<feature type="chain" id="PRO_1000007873" description="4-diphosphocytidyl-2-C-methyl-D-erythritol kinase">
    <location>
        <begin position="1"/>
        <end position="311"/>
    </location>
</feature>
<feature type="active site" evidence="1">
    <location>
        <position position="16"/>
    </location>
</feature>
<feature type="active site" evidence="1">
    <location>
        <position position="142"/>
    </location>
</feature>
<feature type="binding site" evidence="1">
    <location>
        <begin position="100"/>
        <end position="110"/>
    </location>
    <ligand>
        <name>ATP</name>
        <dbReference type="ChEBI" id="CHEBI:30616"/>
    </ligand>
</feature>
<sequence length="311" mass="34805">MQDFAKKKINIKSPAKINLHLEVIGKREDGFHELAMIMQNIDLADYLEFEINNEGLIKLESDCNDLSLSDDNLIVKSANLLRKKSNIDYGANIFLRKNIPIGAGLAGGSSNAAATLIGLNNLWDLKLDQETLCSLASTLGSDIPFFINGGIQLCFGRGEILEKLDSTLEYGAILLKNPNVSVSTAETYKKYSNRFCDQYLTDREMIENIRKNLRDNGLNNLNFDNQHLSIKNDLQLVVENENDSVKQALYLLSKLENCLTFSMSGSGPTCFALFKDKETAKKELTANSKLFKDKGYDSWVCTFLEKGITFI</sequence>
<reference key="1">
    <citation type="journal article" date="2007" name="PLoS Genet.">
        <title>Patterns and implications of gene gain and loss in the evolution of Prochlorococcus.</title>
        <authorList>
            <person name="Kettler G.C."/>
            <person name="Martiny A.C."/>
            <person name="Huang K."/>
            <person name="Zucker J."/>
            <person name="Coleman M.L."/>
            <person name="Rodrigue S."/>
            <person name="Chen F."/>
            <person name="Lapidus A."/>
            <person name="Ferriera S."/>
            <person name="Johnson J."/>
            <person name="Steglich C."/>
            <person name="Church G.M."/>
            <person name="Richardson P."/>
            <person name="Chisholm S.W."/>
        </authorList>
    </citation>
    <scope>NUCLEOTIDE SEQUENCE [LARGE SCALE GENOMIC DNA]</scope>
    <source>
        <strain>AS9601</strain>
    </source>
</reference>
<comment type="function">
    <text evidence="1">Catalyzes the phosphorylation of the position 2 hydroxy group of 4-diphosphocytidyl-2C-methyl-D-erythritol.</text>
</comment>
<comment type="catalytic activity">
    <reaction evidence="1">
        <text>4-CDP-2-C-methyl-D-erythritol + ATP = 4-CDP-2-C-methyl-D-erythritol 2-phosphate + ADP + H(+)</text>
        <dbReference type="Rhea" id="RHEA:18437"/>
        <dbReference type="ChEBI" id="CHEBI:15378"/>
        <dbReference type="ChEBI" id="CHEBI:30616"/>
        <dbReference type="ChEBI" id="CHEBI:57823"/>
        <dbReference type="ChEBI" id="CHEBI:57919"/>
        <dbReference type="ChEBI" id="CHEBI:456216"/>
        <dbReference type="EC" id="2.7.1.148"/>
    </reaction>
</comment>
<comment type="pathway">
    <text evidence="1">Isoprenoid biosynthesis; isopentenyl diphosphate biosynthesis via DXP pathway; isopentenyl diphosphate from 1-deoxy-D-xylulose 5-phosphate: step 3/6.</text>
</comment>
<comment type="similarity">
    <text evidence="1">Belongs to the GHMP kinase family. IspE subfamily.</text>
</comment>
<name>ISPE_PROMS</name>
<organism>
    <name type="scientific">Prochlorococcus marinus (strain AS9601)</name>
    <dbReference type="NCBI Taxonomy" id="146891"/>
    <lineage>
        <taxon>Bacteria</taxon>
        <taxon>Bacillati</taxon>
        <taxon>Cyanobacteriota</taxon>
        <taxon>Cyanophyceae</taxon>
        <taxon>Synechococcales</taxon>
        <taxon>Prochlorococcaceae</taxon>
        <taxon>Prochlorococcus</taxon>
    </lineage>
</organism>
<keyword id="KW-0067">ATP-binding</keyword>
<keyword id="KW-0414">Isoprene biosynthesis</keyword>
<keyword id="KW-0418">Kinase</keyword>
<keyword id="KW-0547">Nucleotide-binding</keyword>
<keyword id="KW-0808">Transferase</keyword>
<gene>
    <name evidence="1" type="primary">ispE</name>
    <name type="ordered locus">A9601_09281</name>
</gene>